<feature type="chain" id="PRO_0000421754" description="Glutamate 2,3-aminomutase">
    <location>
        <begin position="1"/>
        <end position="422"/>
    </location>
</feature>
<feature type="domain" description="Radical SAM core" evidence="2">
    <location>
        <begin position="150"/>
        <end position="371"/>
    </location>
</feature>
<feature type="binding site" evidence="1">
    <location>
        <position position="164"/>
    </location>
    <ligand>
        <name>[4Fe-4S] cluster</name>
        <dbReference type="ChEBI" id="CHEBI:49883"/>
        <note>4Fe-4S-S-AdoMet</note>
    </ligand>
</feature>
<feature type="binding site" evidence="1">
    <location>
        <position position="168"/>
    </location>
    <ligand>
        <name>[4Fe-4S] cluster</name>
        <dbReference type="ChEBI" id="CHEBI:49883"/>
        <note>4Fe-4S-S-AdoMet</note>
    </ligand>
</feature>
<feature type="binding site" evidence="1">
    <location>
        <position position="171"/>
    </location>
    <ligand>
        <name>[4Fe-4S] cluster</name>
        <dbReference type="ChEBI" id="CHEBI:49883"/>
        <note>4Fe-4S-S-AdoMet</note>
    </ligand>
</feature>
<feature type="modified residue" description="N6-(pyridoxal phosphate)lysine" evidence="1">
    <location>
        <position position="376"/>
    </location>
</feature>
<organism>
    <name type="scientific">Clostridioides difficile (strain 630)</name>
    <name type="common">Peptoclostridium difficile</name>
    <dbReference type="NCBI Taxonomy" id="272563"/>
    <lineage>
        <taxon>Bacteria</taxon>
        <taxon>Bacillati</taxon>
        <taxon>Bacillota</taxon>
        <taxon>Clostridia</taxon>
        <taxon>Peptostreptococcales</taxon>
        <taxon>Peptostreptococcaceae</taxon>
        <taxon>Clostridioides</taxon>
    </lineage>
</organism>
<comment type="function">
    <text evidence="3">Catalyzes the interconversion of L-glutamate and L-beta-glutamate. Does not have L-lysine 2,3-aminomutase activity.</text>
</comment>
<comment type="catalytic activity">
    <reaction evidence="3">
        <text>L-glutamate = 3-aminopentanedioate</text>
        <dbReference type="Rhea" id="RHEA:34239"/>
        <dbReference type="ChEBI" id="CHEBI:29985"/>
        <dbReference type="ChEBI" id="CHEBI:66948"/>
        <dbReference type="EC" id="5.4.3.9"/>
    </reaction>
</comment>
<comment type="cofactor">
    <cofactor evidence="3">
        <name>pyridoxal 5'-phosphate</name>
        <dbReference type="ChEBI" id="CHEBI:597326"/>
    </cofactor>
</comment>
<comment type="cofactor">
    <cofactor evidence="2">
        <name>[4Fe-4S] cluster</name>
        <dbReference type="ChEBI" id="CHEBI:49883"/>
    </cofactor>
</comment>
<comment type="biophysicochemical properties">
    <kinetics>
        <KM evidence="3">2.3 mM for L-glutamate</KM>
        <text>kcat is 6.1 sec(-1) with L-glutamate as substrate.</text>
    </kinetics>
</comment>
<comment type="similarity">
    <text evidence="4">Belongs to the radical SAM superfamily.</text>
</comment>
<comment type="caution">
    <text evidence="5">Highly similar to the L-lysine 2,3-aminomutase. However lacks lysyl-binding Asp residues at positions 332 and 369, that are replaced by Lys and Asn residues, respectively (PubMed:17222594).</text>
</comment>
<reference key="1">
    <citation type="journal article" date="2006" name="Nat. Genet.">
        <title>The multidrug-resistant human pathogen Clostridium difficile has a highly mobile, mosaic genome.</title>
        <authorList>
            <person name="Sebaihia M."/>
            <person name="Wren B.W."/>
            <person name="Mullany P."/>
            <person name="Fairweather N.F."/>
            <person name="Minton N."/>
            <person name="Stabler R."/>
            <person name="Thomson N.R."/>
            <person name="Roberts A.P."/>
            <person name="Cerdeno-Tarraga A.M."/>
            <person name="Wang H."/>
            <person name="Holden M.T.G."/>
            <person name="Wright A."/>
            <person name="Churcher C."/>
            <person name="Quail M.A."/>
            <person name="Baker S."/>
            <person name="Bason N."/>
            <person name="Brooks K."/>
            <person name="Chillingworth T."/>
            <person name="Cronin A."/>
            <person name="Davis P."/>
            <person name="Dowd L."/>
            <person name="Fraser A."/>
            <person name="Feltwell T."/>
            <person name="Hance Z."/>
            <person name="Holroyd S."/>
            <person name="Jagels K."/>
            <person name="Moule S."/>
            <person name="Mungall K."/>
            <person name="Price C."/>
            <person name="Rabbinowitsch E."/>
            <person name="Sharp S."/>
            <person name="Simmonds M."/>
            <person name="Stevens K."/>
            <person name="Unwin L."/>
            <person name="Whithead S."/>
            <person name="Dupuy B."/>
            <person name="Dougan G."/>
            <person name="Barrell B."/>
            <person name="Parkhill J."/>
        </authorList>
    </citation>
    <scope>NUCLEOTIDE SEQUENCE [LARGE SCALE GENOMIC DNA]</scope>
    <source>
        <strain>630</strain>
    </source>
</reference>
<reference key="2">
    <citation type="journal article" date="2007" name="Biochim. Biophys. Acta">
        <title>Glutamate 2,3-aminomutase: a new member of the radical SAM superfamily of enzymes.</title>
        <authorList>
            <person name="Ruzicka F.J."/>
            <person name="Frey P.A."/>
        </authorList>
    </citation>
    <scope>FUNCTION</scope>
    <scope>CATALYTIC ACTIVITY</scope>
    <scope>BIOPHYSICOCHEMICAL PROPERTIES</scope>
    <scope>COFACTOR</scope>
</reference>
<proteinExistence type="evidence at protein level"/>
<dbReference type="EC" id="5.4.3.9"/>
<dbReference type="EMBL" id="AM180355">
    <property type="protein sequence ID" value="CAJ69138.1"/>
    <property type="molecule type" value="Genomic_DNA"/>
</dbReference>
<dbReference type="RefSeq" id="WP_003430434.1">
    <property type="nucleotide sequence ID" value="NZ_JAUPES010000011.1"/>
</dbReference>
<dbReference type="RefSeq" id="YP_001088767.1">
    <property type="nucleotide sequence ID" value="NC_009089.1"/>
</dbReference>
<dbReference type="SMR" id="Q185C5"/>
<dbReference type="STRING" id="272563.CD630_22520"/>
<dbReference type="EnsemblBacteria" id="CAJ69138">
    <property type="protein sequence ID" value="CAJ69138"/>
    <property type="gene ID" value="CD630_22520"/>
</dbReference>
<dbReference type="KEGG" id="cdf:CD630_22520"/>
<dbReference type="KEGG" id="pdc:CDIF630_02487"/>
<dbReference type="PATRIC" id="fig|272563.120.peg.2380"/>
<dbReference type="eggNOG" id="COG1509">
    <property type="taxonomic scope" value="Bacteria"/>
</dbReference>
<dbReference type="OrthoDB" id="9768064at2"/>
<dbReference type="PhylomeDB" id="Q185C5"/>
<dbReference type="BioCyc" id="MetaCyc:G12WB-2408-MONOMER"/>
<dbReference type="BioCyc" id="PDIF272563:G12WB-2408-MONOMER"/>
<dbReference type="Proteomes" id="UP000001978">
    <property type="component" value="Chromosome"/>
</dbReference>
<dbReference type="GO" id="GO:0051539">
    <property type="term" value="F:4 iron, 4 sulfur cluster binding"/>
    <property type="evidence" value="ECO:0007669"/>
    <property type="project" value="UniProtKB-KW"/>
</dbReference>
<dbReference type="GO" id="GO:0016869">
    <property type="term" value="F:intramolecular aminotransferase activity"/>
    <property type="evidence" value="ECO:0000314"/>
    <property type="project" value="UniProtKB"/>
</dbReference>
<dbReference type="GO" id="GO:0051536">
    <property type="term" value="F:iron-sulfur cluster binding"/>
    <property type="evidence" value="ECO:0000314"/>
    <property type="project" value="UniProtKB"/>
</dbReference>
<dbReference type="GO" id="GO:0046872">
    <property type="term" value="F:metal ion binding"/>
    <property type="evidence" value="ECO:0007669"/>
    <property type="project" value="UniProtKB-KW"/>
</dbReference>
<dbReference type="GO" id="GO:0030170">
    <property type="term" value="F:pyridoxal phosphate binding"/>
    <property type="evidence" value="ECO:0000314"/>
    <property type="project" value="UniProtKB"/>
</dbReference>
<dbReference type="CDD" id="cd01335">
    <property type="entry name" value="Radical_SAM"/>
    <property type="match status" value="1"/>
</dbReference>
<dbReference type="FunFam" id="3.20.20.70:FF:000095">
    <property type="entry name" value="Lysine 2,3-aminomutase"/>
    <property type="match status" value="1"/>
</dbReference>
<dbReference type="Gene3D" id="6.10.140.1170">
    <property type="match status" value="1"/>
</dbReference>
<dbReference type="Gene3D" id="3.20.20.70">
    <property type="entry name" value="Aldolase class I"/>
    <property type="match status" value="1"/>
</dbReference>
<dbReference type="InterPro" id="IPR013785">
    <property type="entry name" value="Aldolase_TIM"/>
</dbReference>
<dbReference type="InterPro" id="IPR030801">
    <property type="entry name" value="Glu_2_3_NH3_mut"/>
</dbReference>
<dbReference type="InterPro" id="IPR025895">
    <property type="entry name" value="LAM_C_dom"/>
</dbReference>
<dbReference type="InterPro" id="IPR003739">
    <property type="entry name" value="Lys_aminomutase/Glu_NH3_mut"/>
</dbReference>
<dbReference type="InterPro" id="IPR007197">
    <property type="entry name" value="rSAM"/>
</dbReference>
<dbReference type="NCBIfam" id="TIGR04368">
    <property type="entry name" value="Glu_2_3_NH3_mut"/>
    <property type="match status" value="1"/>
</dbReference>
<dbReference type="NCBIfam" id="TIGR00238">
    <property type="entry name" value="KamA family radical SAM protein"/>
    <property type="match status" value="1"/>
</dbReference>
<dbReference type="PANTHER" id="PTHR30538:SF1">
    <property type="entry name" value="L-LYSINE 2,3-AMINOMUTASE"/>
    <property type="match status" value="1"/>
</dbReference>
<dbReference type="PANTHER" id="PTHR30538">
    <property type="entry name" value="LYSINE 2,3-AMINOMUTASE-RELATED"/>
    <property type="match status" value="1"/>
</dbReference>
<dbReference type="Pfam" id="PF12544">
    <property type="entry name" value="LAM_C"/>
    <property type="match status" value="1"/>
</dbReference>
<dbReference type="Pfam" id="PF04055">
    <property type="entry name" value="Radical_SAM"/>
    <property type="match status" value="1"/>
</dbReference>
<dbReference type="PIRSF" id="PIRSF004911">
    <property type="entry name" value="DUF160"/>
    <property type="match status" value="1"/>
</dbReference>
<dbReference type="SFLD" id="SFLDF00290">
    <property type="entry name" value="glutamate_2_3-aminomutase"/>
    <property type="match status" value="1"/>
</dbReference>
<dbReference type="SFLD" id="SFLDG01070">
    <property type="entry name" value="PLP-dependent"/>
    <property type="match status" value="1"/>
</dbReference>
<dbReference type="SUPFAM" id="SSF102114">
    <property type="entry name" value="Radical SAM enzymes"/>
    <property type="match status" value="1"/>
</dbReference>
<dbReference type="PROSITE" id="PS51918">
    <property type="entry name" value="RADICAL_SAM"/>
    <property type="match status" value="1"/>
</dbReference>
<protein>
    <recommendedName>
        <fullName>Glutamate 2,3-aminomutase</fullName>
        <ecNumber>5.4.3.9</ecNumber>
    </recommendedName>
</protein>
<gene>
    <name type="primary">eam</name>
    <name type="ordered locus">CD630_22520</name>
</gene>
<name>EAM_CLOD6</name>
<sequence length="422" mass="48980">MNEQTRISLERAAELKSKIDDYIQARKTINRGLEKEEEINKRKQKILSILNGTEEDWNNYKWQLSNRITDVDTLSKIITLTKKEKEYIKEVGTQFRWAISPYYLSLIDPEDICDPIKLLSIPTHIELEDEQEDLDPMGEEYTNPAGCITRRYPDRLIINVTNECAMYCRHCQRRRNIGQQDSHKSKAIIQESIDYIRENEEIRDVLVTGGDALTLKDDYLEWILSQLKEIPHVDYVRLGTRTLVTMPQRITDEFCNMLKKYHPVYINTHFNHPMEITKESKEACEKLANAGVPLGNQAVLLNGINNDKFVMRCLNQELLKIRVKPYYIFQSKHVKGTKHFNTSVDDGLEIMEYLRGYTSGMAIPTYIVNAPKGGGKTPLLPQYLVSKGTDYVMLRTWEGKVIKMEDEPAVDIKKLIKEQAQD</sequence>
<evidence type="ECO:0000250" key="1"/>
<evidence type="ECO:0000255" key="2">
    <source>
        <dbReference type="PROSITE-ProRule" id="PRU01266"/>
    </source>
</evidence>
<evidence type="ECO:0000269" key="3">
    <source>
    </source>
</evidence>
<evidence type="ECO:0000305" key="4"/>
<evidence type="ECO:0000305" key="5">
    <source>
    </source>
</evidence>
<accession>Q185C5</accession>
<keyword id="KW-0004">4Fe-4S</keyword>
<keyword id="KW-0408">Iron</keyword>
<keyword id="KW-0411">Iron-sulfur</keyword>
<keyword id="KW-0413">Isomerase</keyword>
<keyword id="KW-0479">Metal-binding</keyword>
<keyword id="KW-0663">Pyridoxal phosphate</keyword>
<keyword id="KW-1185">Reference proteome</keyword>
<keyword id="KW-0949">S-adenosyl-L-methionine</keyword>